<organism>
    <name type="scientific">Lacticaseibacillus casei (strain BL23)</name>
    <name type="common">Lactobacillus casei</name>
    <dbReference type="NCBI Taxonomy" id="543734"/>
    <lineage>
        <taxon>Bacteria</taxon>
        <taxon>Bacillati</taxon>
        <taxon>Bacillota</taxon>
        <taxon>Bacilli</taxon>
        <taxon>Lactobacillales</taxon>
        <taxon>Lactobacillaceae</taxon>
        <taxon>Lacticaseibacillus</taxon>
    </lineage>
</organism>
<gene>
    <name evidence="1" type="primary">rpoA</name>
    <name type="ordered locus">LCABL_26450</name>
</gene>
<name>RPOA_LACCB</name>
<evidence type="ECO:0000255" key="1">
    <source>
        <dbReference type="HAMAP-Rule" id="MF_00059"/>
    </source>
</evidence>
<keyword id="KW-0240">DNA-directed RNA polymerase</keyword>
<keyword id="KW-0548">Nucleotidyltransferase</keyword>
<keyword id="KW-0804">Transcription</keyword>
<keyword id="KW-0808">Transferase</keyword>
<comment type="function">
    <text evidence="1">DNA-dependent RNA polymerase catalyzes the transcription of DNA into RNA using the four ribonucleoside triphosphates as substrates.</text>
</comment>
<comment type="catalytic activity">
    <reaction evidence="1">
        <text>RNA(n) + a ribonucleoside 5'-triphosphate = RNA(n+1) + diphosphate</text>
        <dbReference type="Rhea" id="RHEA:21248"/>
        <dbReference type="Rhea" id="RHEA-COMP:14527"/>
        <dbReference type="Rhea" id="RHEA-COMP:17342"/>
        <dbReference type="ChEBI" id="CHEBI:33019"/>
        <dbReference type="ChEBI" id="CHEBI:61557"/>
        <dbReference type="ChEBI" id="CHEBI:140395"/>
        <dbReference type="EC" id="2.7.7.6"/>
    </reaction>
</comment>
<comment type="subunit">
    <text evidence="1">Homodimer. The RNAP catalytic core consists of 2 alpha, 1 beta, 1 beta' and 1 omega subunit. When a sigma factor is associated with the core the holoenzyme is formed, which can initiate transcription.</text>
</comment>
<comment type="domain">
    <text evidence="1">The N-terminal domain is essential for RNAP assembly and basal transcription, whereas the C-terminal domain is involved in interaction with transcriptional regulators and with upstream promoter elements.</text>
</comment>
<comment type="similarity">
    <text evidence="1">Belongs to the RNA polymerase alpha chain family.</text>
</comment>
<accession>B3WAJ2</accession>
<proteinExistence type="inferred from homology"/>
<dbReference type="EC" id="2.7.7.6" evidence="1"/>
<dbReference type="EMBL" id="FM177140">
    <property type="protein sequence ID" value="CAQ67711.1"/>
    <property type="molecule type" value="Genomic_DNA"/>
</dbReference>
<dbReference type="SMR" id="B3WAJ2"/>
<dbReference type="KEGG" id="lcb:LCABL_26450"/>
<dbReference type="HOGENOM" id="CLU_053084_0_1_9"/>
<dbReference type="GO" id="GO:0005737">
    <property type="term" value="C:cytoplasm"/>
    <property type="evidence" value="ECO:0007669"/>
    <property type="project" value="UniProtKB-ARBA"/>
</dbReference>
<dbReference type="GO" id="GO:0000428">
    <property type="term" value="C:DNA-directed RNA polymerase complex"/>
    <property type="evidence" value="ECO:0007669"/>
    <property type="project" value="UniProtKB-KW"/>
</dbReference>
<dbReference type="GO" id="GO:0003677">
    <property type="term" value="F:DNA binding"/>
    <property type="evidence" value="ECO:0007669"/>
    <property type="project" value="UniProtKB-UniRule"/>
</dbReference>
<dbReference type="GO" id="GO:0003899">
    <property type="term" value="F:DNA-directed RNA polymerase activity"/>
    <property type="evidence" value="ECO:0007669"/>
    <property type="project" value="UniProtKB-UniRule"/>
</dbReference>
<dbReference type="GO" id="GO:0046983">
    <property type="term" value="F:protein dimerization activity"/>
    <property type="evidence" value="ECO:0007669"/>
    <property type="project" value="InterPro"/>
</dbReference>
<dbReference type="GO" id="GO:0006351">
    <property type="term" value="P:DNA-templated transcription"/>
    <property type="evidence" value="ECO:0007669"/>
    <property type="project" value="UniProtKB-UniRule"/>
</dbReference>
<dbReference type="CDD" id="cd06928">
    <property type="entry name" value="RNAP_alpha_NTD"/>
    <property type="match status" value="1"/>
</dbReference>
<dbReference type="FunFam" id="1.10.150.20:FF:000001">
    <property type="entry name" value="DNA-directed RNA polymerase subunit alpha"/>
    <property type="match status" value="1"/>
</dbReference>
<dbReference type="FunFam" id="2.170.120.12:FF:000001">
    <property type="entry name" value="DNA-directed RNA polymerase subunit alpha"/>
    <property type="match status" value="1"/>
</dbReference>
<dbReference type="Gene3D" id="1.10.150.20">
    <property type="entry name" value="5' to 3' exonuclease, C-terminal subdomain"/>
    <property type="match status" value="1"/>
</dbReference>
<dbReference type="Gene3D" id="2.170.120.12">
    <property type="entry name" value="DNA-directed RNA polymerase, insert domain"/>
    <property type="match status" value="1"/>
</dbReference>
<dbReference type="Gene3D" id="3.30.1360.10">
    <property type="entry name" value="RNA polymerase, RBP11-like subunit"/>
    <property type="match status" value="1"/>
</dbReference>
<dbReference type="HAMAP" id="MF_00059">
    <property type="entry name" value="RNApol_bact_RpoA"/>
    <property type="match status" value="1"/>
</dbReference>
<dbReference type="InterPro" id="IPR011262">
    <property type="entry name" value="DNA-dir_RNA_pol_insert"/>
</dbReference>
<dbReference type="InterPro" id="IPR011263">
    <property type="entry name" value="DNA-dir_RNA_pol_RpoA/D/Rpb3"/>
</dbReference>
<dbReference type="InterPro" id="IPR011773">
    <property type="entry name" value="DNA-dir_RpoA"/>
</dbReference>
<dbReference type="InterPro" id="IPR036603">
    <property type="entry name" value="RBP11-like"/>
</dbReference>
<dbReference type="InterPro" id="IPR011260">
    <property type="entry name" value="RNAP_asu_C"/>
</dbReference>
<dbReference type="InterPro" id="IPR036643">
    <property type="entry name" value="RNApol_insert_sf"/>
</dbReference>
<dbReference type="NCBIfam" id="NF003513">
    <property type="entry name" value="PRK05182.1-2"/>
    <property type="match status" value="1"/>
</dbReference>
<dbReference type="NCBIfam" id="NF003515">
    <property type="entry name" value="PRK05182.2-1"/>
    <property type="match status" value="1"/>
</dbReference>
<dbReference type="NCBIfam" id="NF003516">
    <property type="entry name" value="PRK05182.2-2"/>
    <property type="match status" value="1"/>
</dbReference>
<dbReference type="NCBIfam" id="NF003519">
    <property type="entry name" value="PRK05182.2-5"/>
    <property type="match status" value="1"/>
</dbReference>
<dbReference type="NCBIfam" id="TIGR02027">
    <property type="entry name" value="rpoA"/>
    <property type="match status" value="1"/>
</dbReference>
<dbReference type="Pfam" id="PF01000">
    <property type="entry name" value="RNA_pol_A_bac"/>
    <property type="match status" value="1"/>
</dbReference>
<dbReference type="Pfam" id="PF03118">
    <property type="entry name" value="RNA_pol_A_CTD"/>
    <property type="match status" value="1"/>
</dbReference>
<dbReference type="Pfam" id="PF01193">
    <property type="entry name" value="RNA_pol_L"/>
    <property type="match status" value="1"/>
</dbReference>
<dbReference type="SMART" id="SM00662">
    <property type="entry name" value="RPOLD"/>
    <property type="match status" value="1"/>
</dbReference>
<dbReference type="SUPFAM" id="SSF47789">
    <property type="entry name" value="C-terminal domain of RNA polymerase alpha subunit"/>
    <property type="match status" value="1"/>
</dbReference>
<dbReference type="SUPFAM" id="SSF56553">
    <property type="entry name" value="Insert subdomain of RNA polymerase alpha subunit"/>
    <property type="match status" value="1"/>
</dbReference>
<dbReference type="SUPFAM" id="SSF55257">
    <property type="entry name" value="RBP11-like subunits of RNA polymerase"/>
    <property type="match status" value="1"/>
</dbReference>
<feature type="chain" id="PRO_1000091951" description="DNA-directed RNA polymerase subunit alpha">
    <location>
        <begin position="1"/>
        <end position="312"/>
    </location>
</feature>
<feature type="region of interest" description="Alpha N-terminal domain (alpha-NTD)" evidence="1">
    <location>
        <begin position="1"/>
        <end position="226"/>
    </location>
</feature>
<feature type="region of interest" description="Alpha C-terminal domain (alpha-CTD)" evidence="1">
    <location>
        <begin position="243"/>
        <end position="312"/>
    </location>
</feature>
<reference key="1">
    <citation type="submission" date="2008-06" db="EMBL/GenBank/DDBJ databases">
        <title>Lactobacillus casei BL23 complete genome sequence.</title>
        <authorList>
            <person name="Maze A."/>
            <person name="Boel G."/>
            <person name="Bourand A."/>
            <person name="Loux V."/>
            <person name="Gibrat J.F."/>
            <person name="Zuniga M."/>
            <person name="Hartke A."/>
            <person name="Deutscher J."/>
        </authorList>
    </citation>
    <scope>NUCLEOTIDE SEQUENCE [LARGE SCALE GENOMIC DNA]</scope>
    <source>
        <strain>BL23</strain>
    </source>
</reference>
<sequence length="312" mass="34759">MIEFEKPNITKVDESTNYGKFVVEPLERGYGTTLGNSLRRILLSSLPGAAISSIQIDGVLHEFSTIDGVLEDVTQIILNIKKLALKMNTDEDKNIEIDVNGPAKVTAADIVADPDVEVLNPEQYICTVADGGHFHVRMTVKKGRGYVAADQNKSDDMPIGVLPIDSIFTPISRVNYQVESTRVGRRNDFDKLTLDVWTNGSISPREAISLAAKILTEHLDIFVNLTDEAKNAEIMVEKEETHKEKMLEMTIEELDLSVRSYNCLKRAGINTVQELTNKTEADMMKVRNLGRKSLEEVKNKLADLGLGLRKED</sequence>
<protein>
    <recommendedName>
        <fullName evidence="1">DNA-directed RNA polymerase subunit alpha</fullName>
        <shortName evidence="1">RNAP subunit alpha</shortName>
        <ecNumber evidence="1">2.7.7.6</ecNumber>
    </recommendedName>
    <alternativeName>
        <fullName evidence="1">RNA polymerase subunit alpha</fullName>
    </alternativeName>
    <alternativeName>
        <fullName evidence="1">Transcriptase subunit alpha</fullName>
    </alternativeName>
</protein>